<evidence type="ECO:0000250" key="1"/>
<evidence type="ECO:0000250" key="2">
    <source>
        <dbReference type="UniProtKB" id="P0C192"/>
    </source>
</evidence>
<evidence type="ECO:0000255" key="3"/>
<evidence type="ECO:0000255" key="4">
    <source>
        <dbReference type="PROSITE-ProRule" id="PRU00114"/>
    </source>
</evidence>
<evidence type="ECO:0000256" key="5">
    <source>
        <dbReference type="SAM" id="MobiDB-lite"/>
    </source>
</evidence>
<evidence type="ECO:0000305" key="6"/>
<name>LRC4B_HUMAN</name>
<protein>
    <recommendedName>
        <fullName>Leucine-rich repeat-containing protein 4B</fullName>
    </recommendedName>
    <alternativeName>
        <fullName>Netrin-G3 ligand</fullName>
        <shortName>NGL-3</shortName>
    </alternativeName>
</protein>
<feature type="signal peptide" evidence="3">
    <location>
        <begin position="1"/>
        <end position="35"/>
    </location>
</feature>
<feature type="chain" id="PRO_0000231654" description="Leucine-rich repeat-containing protein 4B">
    <location>
        <begin position="36"/>
        <end position="713"/>
    </location>
</feature>
<feature type="topological domain" description="Extracellular" evidence="3">
    <location>
        <begin position="36"/>
        <end position="576"/>
    </location>
</feature>
<feature type="transmembrane region" description="Helical" evidence="3">
    <location>
        <begin position="577"/>
        <end position="597"/>
    </location>
</feature>
<feature type="topological domain" description="Cytoplasmic" evidence="3">
    <location>
        <begin position="598"/>
        <end position="713"/>
    </location>
</feature>
<feature type="domain" description="LRRNT">
    <location>
        <begin position="48"/>
        <end position="86"/>
    </location>
</feature>
<feature type="repeat" description="LRR 1">
    <location>
        <begin position="87"/>
        <end position="108"/>
    </location>
</feature>
<feature type="repeat" description="LRR 2">
    <location>
        <begin position="111"/>
        <end position="132"/>
    </location>
</feature>
<feature type="repeat" description="LRR 3">
    <location>
        <begin position="135"/>
        <end position="156"/>
    </location>
</feature>
<feature type="repeat" description="LRR 4">
    <location>
        <begin position="159"/>
        <end position="180"/>
    </location>
</feature>
<feature type="repeat" description="LRR 5">
    <location>
        <begin position="183"/>
        <end position="205"/>
    </location>
</feature>
<feature type="repeat" description="LRR 6">
    <location>
        <begin position="208"/>
        <end position="229"/>
    </location>
</feature>
<feature type="repeat" description="LRR 7">
    <location>
        <begin position="230"/>
        <end position="251"/>
    </location>
</feature>
<feature type="repeat" description="LRR 8">
    <location>
        <begin position="254"/>
        <end position="275"/>
    </location>
</feature>
<feature type="repeat" description="LRR 9">
    <location>
        <begin position="278"/>
        <end position="299"/>
    </location>
</feature>
<feature type="domain" description="LRRCT">
    <location>
        <begin position="311"/>
        <end position="363"/>
    </location>
</feature>
<feature type="domain" description="Ig-like C2-type">
    <location>
        <begin position="364"/>
        <end position="452"/>
    </location>
</feature>
<feature type="region of interest" description="Disordered" evidence="5">
    <location>
        <begin position="497"/>
        <end position="551"/>
    </location>
</feature>
<feature type="region of interest" description="Disordered" evidence="5">
    <location>
        <begin position="694"/>
        <end position="713"/>
    </location>
</feature>
<feature type="compositionally biased region" description="Low complexity" evidence="5">
    <location>
        <begin position="528"/>
        <end position="546"/>
    </location>
</feature>
<feature type="compositionally biased region" description="Basic and acidic residues" evidence="5">
    <location>
        <begin position="703"/>
        <end position="713"/>
    </location>
</feature>
<feature type="modified residue" description="Phosphoserine" evidence="2">
    <location>
        <position position="693"/>
    </location>
</feature>
<feature type="glycosylation site" description="N-linked (GlcNAc...) asparagine" evidence="3">
    <location>
        <position position="224"/>
    </location>
</feature>
<feature type="glycosylation site" description="N-linked (GlcNAc...) asparagine" evidence="3">
    <location>
        <position position="283"/>
    </location>
</feature>
<feature type="glycosylation site" description="N-linked (GlcNAc...) asparagine" evidence="3">
    <location>
        <position position="333"/>
    </location>
</feature>
<feature type="glycosylation site" description="N-linked (GlcNAc...) asparagine" evidence="3">
    <location>
        <position position="374"/>
    </location>
</feature>
<feature type="glycosylation site" description="N-linked (GlcNAc...) asparagine" evidence="3">
    <location>
        <position position="400"/>
    </location>
</feature>
<feature type="glycosylation site" description="N-linked (GlcNAc...) asparagine" evidence="3">
    <location>
        <position position="422"/>
    </location>
</feature>
<feature type="glycosylation site" description="N-linked (GlcNAc...) asparagine" evidence="3">
    <location>
        <position position="425"/>
    </location>
</feature>
<feature type="glycosylation site" description="N-linked (GlcNAc...) asparagine" evidence="3">
    <location>
        <position position="444"/>
    </location>
</feature>
<feature type="glycosylation site" description="N-linked (GlcNAc...) asparagine" evidence="3">
    <location>
        <position position="452"/>
    </location>
</feature>
<feature type="disulfide bond" evidence="4">
    <location>
        <begin position="385"/>
        <end position="436"/>
    </location>
</feature>
<feature type="sequence conflict" description="In Ref. 2; AAH56207." evidence="6" ref="2">
    <original>AV</original>
    <variation>TA</variation>
    <location>
        <begin position="637"/>
        <end position="638"/>
    </location>
</feature>
<reference key="1">
    <citation type="journal article" date="2004" name="Nature">
        <title>The DNA sequence and biology of human chromosome 19.</title>
        <authorList>
            <person name="Grimwood J."/>
            <person name="Gordon L.A."/>
            <person name="Olsen A.S."/>
            <person name="Terry A."/>
            <person name="Schmutz J."/>
            <person name="Lamerdin J.E."/>
            <person name="Hellsten U."/>
            <person name="Goodstein D."/>
            <person name="Couronne O."/>
            <person name="Tran-Gyamfi M."/>
            <person name="Aerts A."/>
            <person name="Altherr M."/>
            <person name="Ashworth L."/>
            <person name="Bajorek E."/>
            <person name="Black S."/>
            <person name="Branscomb E."/>
            <person name="Caenepeel S."/>
            <person name="Carrano A.V."/>
            <person name="Caoile C."/>
            <person name="Chan Y.M."/>
            <person name="Christensen M."/>
            <person name="Cleland C.A."/>
            <person name="Copeland A."/>
            <person name="Dalin E."/>
            <person name="Dehal P."/>
            <person name="Denys M."/>
            <person name="Detter J.C."/>
            <person name="Escobar J."/>
            <person name="Flowers D."/>
            <person name="Fotopulos D."/>
            <person name="Garcia C."/>
            <person name="Georgescu A.M."/>
            <person name="Glavina T."/>
            <person name="Gomez M."/>
            <person name="Gonzales E."/>
            <person name="Groza M."/>
            <person name="Hammon N."/>
            <person name="Hawkins T."/>
            <person name="Haydu L."/>
            <person name="Ho I."/>
            <person name="Huang W."/>
            <person name="Israni S."/>
            <person name="Jett J."/>
            <person name="Kadner K."/>
            <person name="Kimball H."/>
            <person name="Kobayashi A."/>
            <person name="Larionov V."/>
            <person name="Leem S.-H."/>
            <person name="Lopez F."/>
            <person name="Lou Y."/>
            <person name="Lowry S."/>
            <person name="Malfatti S."/>
            <person name="Martinez D."/>
            <person name="McCready P.M."/>
            <person name="Medina C."/>
            <person name="Morgan J."/>
            <person name="Nelson K."/>
            <person name="Nolan M."/>
            <person name="Ovcharenko I."/>
            <person name="Pitluck S."/>
            <person name="Pollard M."/>
            <person name="Popkie A.P."/>
            <person name="Predki P."/>
            <person name="Quan G."/>
            <person name="Ramirez L."/>
            <person name="Rash S."/>
            <person name="Retterer J."/>
            <person name="Rodriguez A."/>
            <person name="Rogers S."/>
            <person name="Salamov A."/>
            <person name="Salazar A."/>
            <person name="She X."/>
            <person name="Smith D."/>
            <person name="Slezak T."/>
            <person name="Solovyev V."/>
            <person name="Thayer N."/>
            <person name="Tice H."/>
            <person name="Tsai M."/>
            <person name="Ustaszewska A."/>
            <person name="Vo N."/>
            <person name="Wagner M."/>
            <person name="Wheeler J."/>
            <person name="Wu K."/>
            <person name="Xie G."/>
            <person name="Yang J."/>
            <person name="Dubchak I."/>
            <person name="Furey T.S."/>
            <person name="DeJong P."/>
            <person name="Dickson M."/>
            <person name="Gordon D."/>
            <person name="Eichler E.E."/>
            <person name="Pennacchio L.A."/>
            <person name="Richardson P."/>
            <person name="Stubbs L."/>
            <person name="Rokhsar D.S."/>
            <person name="Myers R.M."/>
            <person name="Rubin E.M."/>
            <person name="Lucas S.M."/>
        </authorList>
    </citation>
    <scope>NUCLEOTIDE SEQUENCE [LARGE SCALE GENOMIC DNA]</scope>
</reference>
<reference key="2">
    <citation type="journal article" date="2004" name="Genome Res.">
        <title>The status, quality, and expansion of the NIH full-length cDNA project: the Mammalian Gene Collection (MGC).</title>
        <authorList>
            <consortium name="The MGC Project Team"/>
        </authorList>
    </citation>
    <scope>NUCLEOTIDE SEQUENCE [LARGE SCALE MRNA] OF 208-713</scope>
    <source>
        <tissue>Brain</tissue>
    </source>
</reference>
<reference key="3">
    <citation type="journal article" date="2007" name="BMC Genomics">
        <title>The full-ORF clone resource of the German cDNA consortium.</title>
        <authorList>
            <person name="Bechtel S."/>
            <person name="Rosenfelder H."/>
            <person name="Duda A."/>
            <person name="Schmidt C.P."/>
            <person name="Ernst U."/>
            <person name="Wellenreuther R."/>
            <person name="Mehrle A."/>
            <person name="Schuster C."/>
            <person name="Bahr A."/>
            <person name="Bloecker H."/>
            <person name="Heubner D."/>
            <person name="Hoerlein A."/>
            <person name="Michel G."/>
            <person name="Wedler H."/>
            <person name="Koehrer K."/>
            <person name="Ottenwaelder B."/>
            <person name="Poustka A."/>
            <person name="Wiemann S."/>
            <person name="Schupp I."/>
        </authorList>
    </citation>
    <scope>NUCLEOTIDE SEQUENCE [LARGE SCALE MRNA] OF 216-636</scope>
    <source>
        <tissue>Amygdala</tissue>
    </source>
</reference>
<organism>
    <name type="scientific">Homo sapiens</name>
    <name type="common">Human</name>
    <dbReference type="NCBI Taxonomy" id="9606"/>
    <lineage>
        <taxon>Eukaryota</taxon>
        <taxon>Metazoa</taxon>
        <taxon>Chordata</taxon>
        <taxon>Craniata</taxon>
        <taxon>Vertebrata</taxon>
        <taxon>Euteleostomi</taxon>
        <taxon>Mammalia</taxon>
        <taxon>Eutheria</taxon>
        <taxon>Euarchontoglires</taxon>
        <taxon>Primates</taxon>
        <taxon>Haplorrhini</taxon>
        <taxon>Catarrhini</taxon>
        <taxon>Hominidae</taxon>
        <taxon>Homo</taxon>
    </lineage>
</organism>
<proteinExistence type="evidence at protein level"/>
<keyword id="KW-1003">Cell membrane</keyword>
<keyword id="KW-0966">Cell projection</keyword>
<keyword id="KW-1015">Disulfide bond</keyword>
<keyword id="KW-0325">Glycoprotein</keyword>
<keyword id="KW-0393">Immunoglobulin domain</keyword>
<keyword id="KW-0433">Leucine-rich repeat</keyword>
<keyword id="KW-0472">Membrane</keyword>
<keyword id="KW-0597">Phosphoprotein</keyword>
<keyword id="KW-1267">Proteomics identification</keyword>
<keyword id="KW-1185">Reference proteome</keyword>
<keyword id="KW-0677">Repeat</keyword>
<keyword id="KW-0732">Signal</keyword>
<keyword id="KW-0770">Synapse</keyword>
<keyword id="KW-0812">Transmembrane</keyword>
<keyword id="KW-1133">Transmembrane helix</keyword>
<sequence length="713" mass="76434">MARARGSPCPPLPPGRMSWPHGALLFLWLFSPPLGAGGGGVAVTSAAGGGSPPATSCPVACSCSNQASRVICTRRDLAEVPASIPVNTRYLNLQENGIQVIRTDTFKHLRHLEILQLSKNLVRKIEVGAFNGLPSLNTLELFDNRLTTVPTQAFEYLSKLRELWLRNNPIESIPSYAFNRVPSLRRLDLGELKRLEYISEAAFEGLVNLRYLNLGMCNLKDIPNLTALVRLEELELSGNRLDLIRPGSFQGLTSLRKLWLMHAQVATIERNAFDDLKSLEELNLSHNNLMSLPHDLFTPLHRLERVHLNHNPWHCNCDVLWLSWWLKETVPSNTTCCARCHAPAGLKGRYIGELDQSHFTCYAPVIVEPPTDLNVTEGMAAELKCRTGTSMTSVNWLTPNGTLMTHGSYRVRISVLHDGTLNFTNVTVQDTGQYTCMVTNSAGNTTASATLNVSAVDPVAAGGTGSGGGGPGGSGGVGGGSGGYTYFTTVTVETLETQPGEEALQPRGTEKEPPGPTTDGVWGGGRPGDAAGPASSSTTAPAPRSSRPTEKAFTVPITDVTENALKDLDDVMKTTKIIIGCFVAITFMAAVMLVAFYKLRKQHQLHKHHGPTRTVEIINVEDELPAASAVSVAAAAAVASGGGVGGDSHLALPALERDHLNHHHYVAAAFKAHYSSNPSGGGCGGKGPPGLNSIHEPLLFKSGSKENVQETQI</sequence>
<dbReference type="EMBL" id="AC008743">
    <property type="status" value="NOT_ANNOTATED_CDS"/>
    <property type="molecule type" value="Genomic_DNA"/>
</dbReference>
<dbReference type="EMBL" id="BC019687">
    <property type="protein sequence ID" value="AAH19687.1"/>
    <property type="status" value="ALT_INIT"/>
    <property type="molecule type" value="mRNA"/>
</dbReference>
<dbReference type="EMBL" id="BC056207">
    <property type="protein sequence ID" value="AAH56207.1"/>
    <property type="molecule type" value="mRNA"/>
</dbReference>
<dbReference type="EMBL" id="AL137451">
    <property type="protein sequence ID" value="CAB70743.2"/>
    <property type="molecule type" value="mRNA"/>
</dbReference>
<dbReference type="CCDS" id="CCDS42595.1"/>
<dbReference type="PIR" id="T46266">
    <property type="entry name" value="T46266"/>
</dbReference>
<dbReference type="RefSeq" id="NP_001073926.1">
    <property type="nucleotide sequence ID" value="NM_001080457.2"/>
</dbReference>
<dbReference type="RefSeq" id="NP_001335497.1">
    <property type="nucleotide sequence ID" value="NM_001348568.1"/>
</dbReference>
<dbReference type="RefSeq" id="XP_005259486.1">
    <property type="nucleotide sequence ID" value="XM_005259429.6"/>
</dbReference>
<dbReference type="RefSeq" id="XP_006723569.1">
    <property type="nucleotide sequence ID" value="XM_006723506.4"/>
</dbReference>
<dbReference type="RefSeq" id="XP_011525822.1">
    <property type="nucleotide sequence ID" value="XM_011527520.4"/>
</dbReference>
<dbReference type="RefSeq" id="XP_047295676.1">
    <property type="nucleotide sequence ID" value="XM_047439720.1"/>
</dbReference>
<dbReference type="SMR" id="Q9NT99"/>
<dbReference type="BioGRID" id="125098">
    <property type="interactions" value="14"/>
</dbReference>
<dbReference type="FunCoup" id="Q9NT99">
    <property type="interactions" value="369"/>
</dbReference>
<dbReference type="IntAct" id="Q9NT99">
    <property type="interactions" value="9"/>
</dbReference>
<dbReference type="STRING" id="9606.ENSP00000498662"/>
<dbReference type="TCDB" id="8.A.43.1.24">
    <property type="family name" value="the neat-domain containing methaemoglobin heme sequestration (n-mhs) family"/>
</dbReference>
<dbReference type="GlyCosmos" id="Q9NT99">
    <property type="glycosylation" value="10 sites, 1 glycan"/>
</dbReference>
<dbReference type="GlyGen" id="Q9NT99">
    <property type="glycosylation" value="12 sites, 1 N-linked glycan (2 sites), 2 O-linked glycans (2 sites)"/>
</dbReference>
<dbReference type="iPTMnet" id="Q9NT99"/>
<dbReference type="PhosphoSitePlus" id="Q9NT99"/>
<dbReference type="BioMuta" id="LRRC4B"/>
<dbReference type="DMDM" id="91207142"/>
<dbReference type="jPOST" id="Q9NT99"/>
<dbReference type="MassIVE" id="Q9NT99"/>
<dbReference type="PaxDb" id="9606-ENSP00000471502"/>
<dbReference type="PeptideAtlas" id="Q9NT99"/>
<dbReference type="ProteomicsDB" id="82604"/>
<dbReference type="Pumba" id="Q9NT99"/>
<dbReference type="Antibodypedia" id="53687">
    <property type="antibodies" value="76 antibodies from 18 providers"/>
</dbReference>
<dbReference type="DNASU" id="94030"/>
<dbReference type="Ensembl" id="ENST00000389201.7">
    <property type="protein sequence ID" value="ENSP00000373853.3"/>
    <property type="gene ID" value="ENSG00000131409.13"/>
</dbReference>
<dbReference type="Ensembl" id="ENST00000599957.5">
    <property type="protein sequence ID" value="ENSP00000471502.1"/>
    <property type="gene ID" value="ENSG00000131409.13"/>
</dbReference>
<dbReference type="Ensembl" id="ENST00000652263.1">
    <property type="protein sequence ID" value="ENSP00000498662.1"/>
    <property type="gene ID" value="ENSG00000131409.13"/>
</dbReference>
<dbReference type="GeneID" id="94030"/>
<dbReference type="KEGG" id="hsa:94030"/>
<dbReference type="MANE-Select" id="ENST00000652263.1">
    <property type="protein sequence ID" value="ENSP00000498662.1"/>
    <property type="RefSeq nucleotide sequence ID" value="NM_001080457.2"/>
    <property type="RefSeq protein sequence ID" value="NP_001073926.1"/>
</dbReference>
<dbReference type="UCSC" id="uc002pss.4">
    <property type="organism name" value="human"/>
</dbReference>
<dbReference type="AGR" id="HGNC:25042"/>
<dbReference type="CTD" id="94030"/>
<dbReference type="DisGeNET" id="94030"/>
<dbReference type="GeneCards" id="LRRC4B"/>
<dbReference type="HGNC" id="HGNC:25042">
    <property type="gene designation" value="LRRC4B"/>
</dbReference>
<dbReference type="HPA" id="ENSG00000131409">
    <property type="expression patterns" value="Tissue enhanced (brain, cervix, pituitary gland)"/>
</dbReference>
<dbReference type="neXtProt" id="NX_Q9NT99"/>
<dbReference type="OpenTargets" id="ENSG00000131409"/>
<dbReference type="PharmGKB" id="PA134890612"/>
<dbReference type="VEuPathDB" id="HostDB:ENSG00000131409"/>
<dbReference type="eggNOG" id="KOG0619">
    <property type="taxonomic scope" value="Eukaryota"/>
</dbReference>
<dbReference type="GeneTree" id="ENSGT00940000160261"/>
<dbReference type="HOGENOM" id="CLU_000288_18_24_1"/>
<dbReference type="InParanoid" id="Q9NT99"/>
<dbReference type="OMA" id="YKAHYNN"/>
<dbReference type="OrthoDB" id="28057at2759"/>
<dbReference type="PAN-GO" id="Q9NT99">
    <property type="GO annotations" value="8 GO annotations based on evolutionary models"/>
</dbReference>
<dbReference type="PhylomeDB" id="Q9NT99"/>
<dbReference type="TreeFam" id="TF324303"/>
<dbReference type="PathwayCommons" id="Q9NT99"/>
<dbReference type="Reactome" id="R-HSA-388844">
    <property type="pathway name" value="Receptor-type tyrosine-protein phosphatases"/>
</dbReference>
<dbReference type="SignaLink" id="Q9NT99"/>
<dbReference type="SIGNOR" id="Q9NT99"/>
<dbReference type="BioGRID-ORCS" id="94030">
    <property type="hits" value="12 hits in 1149 CRISPR screens"/>
</dbReference>
<dbReference type="ChiTaRS" id="LRRC4B">
    <property type="organism name" value="human"/>
</dbReference>
<dbReference type="GenomeRNAi" id="94030"/>
<dbReference type="Pharos" id="Q9NT99">
    <property type="development level" value="Tbio"/>
</dbReference>
<dbReference type="PRO" id="PR:Q9NT99"/>
<dbReference type="Proteomes" id="UP000005640">
    <property type="component" value="Chromosome 19"/>
</dbReference>
<dbReference type="RNAct" id="Q9NT99">
    <property type="molecule type" value="protein"/>
</dbReference>
<dbReference type="Bgee" id="ENSG00000131409">
    <property type="expression patterns" value="Expressed in cortical plate and 104 other cell types or tissues"/>
</dbReference>
<dbReference type="ExpressionAtlas" id="Q9NT99">
    <property type="expression patterns" value="baseline and differential"/>
</dbReference>
<dbReference type="GO" id="GO:0044300">
    <property type="term" value="C:cerebellar mossy fiber"/>
    <property type="evidence" value="ECO:0007669"/>
    <property type="project" value="Ensembl"/>
</dbReference>
<dbReference type="GO" id="GO:0098978">
    <property type="term" value="C:glutamatergic synapse"/>
    <property type="evidence" value="ECO:0000318"/>
    <property type="project" value="GO_Central"/>
</dbReference>
<dbReference type="GO" id="GO:0005886">
    <property type="term" value="C:plasma membrane"/>
    <property type="evidence" value="ECO:0000318"/>
    <property type="project" value="GO_Central"/>
</dbReference>
<dbReference type="GO" id="GO:0098839">
    <property type="term" value="C:postsynaptic density membrane"/>
    <property type="evidence" value="ECO:0000318"/>
    <property type="project" value="GO_Central"/>
</dbReference>
<dbReference type="GO" id="GO:0042734">
    <property type="term" value="C:presynaptic membrane"/>
    <property type="evidence" value="ECO:0007669"/>
    <property type="project" value="UniProtKB-SubCell"/>
</dbReference>
<dbReference type="GO" id="GO:0005102">
    <property type="term" value="F:signaling receptor binding"/>
    <property type="evidence" value="ECO:0000318"/>
    <property type="project" value="GO_Central"/>
</dbReference>
<dbReference type="GO" id="GO:0051965">
    <property type="term" value="P:positive regulation of synapse assembly"/>
    <property type="evidence" value="ECO:0000250"/>
    <property type="project" value="BHF-UCL"/>
</dbReference>
<dbReference type="GO" id="GO:0099151">
    <property type="term" value="P:regulation of postsynaptic density assembly"/>
    <property type="evidence" value="ECO:0000318"/>
    <property type="project" value="GO_Central"/>
</dbReference>
<dbReference type="GO" id="GO:1905606">
    <property type="term" value="P:regulation of presynapse assembly"/>
    <property type="evidence" value="ECO:0000318"/>
    <property type="project" value="GO_Central"/>
</dbReference>
<dbReference type="GO" id="GO:0099560">
    <property type="term" value="P:synaptic membrane adhesion"/>
    <property type="evidence" value="ECO:0000318"/>
    <property type="project" value="GO_Central"/>
</dbReference>
<dbReference type="FunFam" id="3.80.10.10:FF:000012">
    <property type="entry name" value="Leucine rich repeat containing 4"/>
    <property type="match status" value="1"/>
</dbReference>
<dbReference type="FunFam" id="2.60.40.10:FF:000076">
    <property type="entry name" value="Leucine-rich repeat and Ig domain-containing 4"/>
    <property type="match status" value="1"/>
</dbReference>
<dbReference type="Gene3D" id="2.60.40.10">
    <property type="entry name" value="Immunoglobulins"/>
    <property type="match status" value="1"/>
</dbReference>
<dbReference type="Gene3D" id="3.80.10.10">
    <property type="entry name" value="Ribonuclease Inhibitor"/>
    <property type="match status" value="1"/>
</dbReference>
<dbReference type="InterPro" id="IPR000483">
    <property type="entry name" value="Cys-rich_flank_reg_C"/>
</dbReference>
<dbReference type="InterPro" id="IPR007110">
    <property type="entry name" value="Ig-like_dom"/>
</dbReference>
<dbReference type="InterPro" id="IPR036179">
    <property type="entry name" value="Ig-like_dom_sf"/>
</dbReference>
<dbReference type="InterPro" id="IPR013783">
    <property type="entry name" value="Ig-like_fold"/>
</dbReference>
<dbReference type="InterPro" id="IPR013098">
    <property type="entry name" value="Ig_I-set"/>
</dbReference>
<dbReference type="InterPro" id="IPR003599">
    <property type="entry name" value="Ig_sub"/>
</dbReference>
<dbReference type="InterPro" id="IPR003598">
    <property type="entry name" value="Ig_sub2"/>
</dbReference>
<dbReference type="InterPro" id="IPR001611">
    <property type="entry name" value="Leu-rich_rpt"/>
</dbReference>
<dbReference type="InterPro" id="IPR003591">
    <property type="entry name" value="Leu-rich_rpt_typical-subtyp"/>
</dbReference>
<dbReference type="InterPro" id="IPR032675">
    <property type="entry name" value="LRR_dom_sf"/>
</dbReference>
<dbReference type="InterPro" id="IPR050541">
    <property type="entry name" value="LRR_TM_domain-containing"/>
</dbReference>
<dbReference type="InterPro" id="IPR000372">
    <property type="entry name" value="LRRNT"/>
</dbReference>
<dbReference type="PANTHER" id="PTHR24369">
    <property type="entry name" value="ANTIGEN BSP, PUTATIVE-RELATED"/>
    <property type="match status" value="1"/>
</dbReference>
<dbReference type="PANTHER" id="PTHR24369:SF102">
    <property type="entry name" value="LEUCINE-RICH REPEAT-CONTAINING PROTEIN 4B"/>
    <property type="match status" value="1"/>
</dbReference>
<dbReference type="Pfam" id="PF07679">
    <property type="entry name" value="I-set"/>
    <property type="match status" value="1"/>
</dbReference>
<dbReference type="Pfam" id="PF00560">
    <property type="entry name" value="LRR_1"/>
    <property type="match status" value="1"/>
</dbReference>
<dbReference type="Pfam" id="PF13855">
    <property type="entry name" value="LRR_8"/>
    <property type="match status" value="3"/>
</dbReference>
<dbReference type="SMART" id="SM00409">
    <property type="entry name" value="IG"/>
    <property type="match status" value="1"/>
</dbReference>
<dbReference type="SMART" id="SM00408">
    <property type="entry name" value="IGc2"/>
    <property type="match status" value="1"/>
</dbReference>
<dbReference type="SMART" id="SM00369">
    <property type="entry name" value="LRR_TYP"/>
    <property type="match status" value="8"/>
</dbReference>
<dbReference type="SMART" id="SM00082">
    <property type="entry name" value="LRRCT"/>
    <property type="match status" value="1"/>
</dbReference>
<dbReference type="SMART" id="SM00013">
    <property type="entry name" value="LRRNT"/>
    <property type="match status" value="1"/>
</dbReference>
<dbReference type="SUPFAM" id="SSF48726">
    <property type="entry name" value="Immunoglobulin"/>
    <property type="match status" value="1"/>
</dbReference>
<dbReference type="SUPFAM" id="SSF52058">
    <property type="entry name" value="L domain-like"/>
    <property type="match status" value="1"/>
</dbReference>
<dbReference type="PROSITE" id="PS50835">
    <property type="entry name" value="IG_LIKE"/>
    <property type="match status" value="1"/>
</dbReference>
<dbReference type="PROSITE" id="PS51450">
    <property type="entry name" value="LRR"/>
    <property type="match status" value="7"/>
</dbReference>
<gene>
    <name type="primary">LRRC4B</name>
    <name type="synonym">LRIG4</name>
</gene>
<accession>Q9NT99</accession>
<accession>Q3ZCQ4</accession>
<accession>Q58F20</accession>
<comment type="function">
    <text evidence="1">Synaptic adhesion protein. Regulates the formation of excitatory synapses. The trans-synaptic adhesion between LRRC4B and PTPRF regulates the formation of excitatory synapses in a bidirectional manner (By similarity).</text>
</comment>
<comment type="subunit">
    <text evidence="1">Interacts with PTPRF. Interacts with DLG4.</text>
</comment>
<comment type="subcellular location">
    <subcellularLocation>
        <location>Membrane</location>
        <topology>Single-pass membrane protein</topology>
    </subcellularLocation>
    <subcellularLocation>
        <location evidence="1">Presynaptic cell membrane</location>
    </subcellularLocation>
</comment>
<comment type="domain">
    <text evidence="1">The last 4 C-terminal residues bind to the first 2 PDZ domains of DLG4.</text>
</comment>
<comment type="PTM">
    <text evidence="1">N-glycosylated. O-glycosylated; contains sialic acid.</text>
</comment>
<comment type="sequence caution" evidence="6">
    <conflict type="erroneous initiation">
        <sequence resource="EMBL-CDS" id="AAH19687"/>
    </conflict>
</comment>